<name>PALY_MYCMD</name>
<organism>
    <name type="scientific">Mycosarcoma maydis</name>
    <name type="common">Corn smut fungus</name>
    <name type="synonym">Ustilago maydis</name>
    <dbReference type="NCBI Taxonomy" id="5270"/>
    <lineage>
        <taxon>Eukaryota</taxon>
        <taxon>Fungi</taxon>
        <taxon>Dikarya</taxon>
        <taxon>Basidiomycota</taxon>
        <taxon>Ustilaginomycotina</taxon>
        <taxon>Ustilaginomycetes</taxon>
        <taxon>Ustilaginales</taxon>
        <taxon>Ustilaginaceae</taxon>
        <taxon>Mycosarcoma</taxon>
    </lineage>
</organism>
<keyword id="KW-0963">Cytoplasm</keyword>
<keyword id="KW-0456">Lyase</keyword>
<keyword id="KW-0585">Phenylalanine catabolism</keyword>
<keyword id="KW-0587">Phenylpropanoid metabolism</keyword>
<keyword id="KW-1185">Reference proteome</keyword>
<proteinExistence type="inferred from homology"/>
<accession>Q96V77</accession>
<accession>A0A0D1CF47</accession>
<accession>Q4PII5</accession>
<comment type="function">
    <text evidence="1 2">Catalyzes the non-oxidative deamination of L-phenylalanine to form trans-cinnamic acid and a free ammonium ion (By similarity). Facilitates the commitment step in phenylpropanoid pathways that produce secondary metabolites such as lignins, coumarins and flavonoids (By similarity).</text>
</comment>
<comment type="catalytic activity">
    <reaction evidence="1">
        <text>L-phenylalanine = (E)-cinnamate + NH4(+)</text>
        <dbReference type="Rhea" id="RHEA:21384"/>
        <dbReference type="ChEBI" id="CHEBI:15669"/>
        <dbReference type="ChEBI" id="CHEBI:28938"/>
        <dbReference type="ChEBI" id="CHEBI:58095"/>
        <dbReference type="EC" id="4.3.1.24"/>
    </reaction>
</comment>
<comment type="pathway">
    <text evidence="6">Phenylpropanoid metabolism; trans-cinnamate biosynthesis; trans-cinnamate from L-phenylalanine: step 1/1.</text>
</comment>
<comment type="subunit">
    <text evidence="2">Homotetramer.</text>
</comment>
<comment type="subcellular location">
    <subcellularLocation>
        <location evidence="6">Cytoplasm</location>
    </subcellularLocation>
</comment>
<comment type="PTM">
    <text evidence="3">Contains an active site 4-methylidene-imidazol-5-one (MIO), which is formed autocatalytically by cyclization and dehydration of residues Ala-Ser-Gly.</text>
</comment>
<comment type="similarity">
    <text evidence="6">Belongs to the PAL/histidase family.</text>
</comment>
<evidence type="ECO:0000250" key="1">
    <source>
        <dbReference type="UniProtKB" id="A0A4Y6HUI7"/>
    </source>
</evidence>
<evidence type="ECO:0000250" key="2">
    <source>
        <dbReference type="UniProtKB" id="P11544"/>
    </source>
</evidence>
<evidence type="ECO:0000250" key="3">
    <source>
        <dbReference type="UniProtKB" id="Q68G84"/>
    </source>
</evidence>
<evidence type="ECO:0000255" key="4">
    <source>
        <dbReference type="PROSITE-ProRule" id="PRU10122"/>
    </source>
</evidence>
<evidence type="ECO:0000303" key="5">
    <source>
    </source>
</evidence>
<evidence type="ECO:0000305" key="6"/>
<protein>
    <recommendedName>
        <fullName evidence="5">Phenylalanine ammonia-lyase</fullName>
        <ecNumber evidence="1">4.3.1.24</ecNumber>
    </recommendedName>
</protein>
<dbReference type="EC" id="4.3.1.24" evidence="1"/>
<dbReference type="EMBL" id="AF306551">
    <property type="protein sequence ID" value="AAL09388.1"/>
    <property type="molecule type" value="Genomic_DNA"/>
</dbReference>
<dbReference type="EMBL" id="CM003140">
    <property type="protein sequence ID" value="KIS71637.1"/>
    <property type="molecule type" value="Genomic_DNA"/>
</dbReference>
<dbReference type="RefSeq" id="XP_011386045.1">
    <property type="nucleotide sequence ID" value="XM_011387743.1"/>
</dbReference>
<dbReference type="SMR" id="Q96V77"/>
<dbReference type="STRING" id="237631.Q96V77"/>
<dbReference type="EnsemblFungi" id="KIS71637">
    <property type="protein sequence ID" value="KIS71637"/>
    <property type="gene ID" value="UMAG_00078"/>
</dbReference>
<dbReference type="GeneID" id="23561479"/>
<dbReference type="KEGG" id="uma:UMAG_00078"/>
<dbReference type="VEuPathDB" id="FungiDB:UMAG_00078"/>
<dbReference type="eggNOG" id="KOG0222">
    <property type="taxonomic scope" value="Eukaryota"/>
</dbReference>
<dbReference type="HOGENOM" id="CLU_014801_3_1_1"/>
<dbReference type="InParanoid" id="Q96V77"/>
<dbReference type="OMA" id="GNFHGDY"/>
<dbReference type="OrthoDB" id="10051290at2759"/>
<dbReference type="BioCyc" id="MetaCyc:MONOMER-17190"/>
<dbReference type="UniPathway" id="UPA00713">
    <property type="reaction ID" value="UER00725"/>
</dbReference>
<dbReference type="Proteomes" id="UP000000561">
    <property type="component" value="Chromosome 1"/>
</dbReference>
<dbReference type="GO" id="GO:0005737">
    <property type="term" value="C:cytoplasm"/>
    <property type="evidence" value="ECO:0007669"/>
    <property type="project" value="UniProtKB-SubCell"/>
</dbReference>
<dbReference type="GO" id="GO:0016841">
    <property type="term" value="F:ammonia-lyase activity"/>
    <property type="evidence" value="ECO:0000318"/>
    <property type="project" value="GO_Central"/>
</dbReference>
<dbReference type="GO" id="GO:0045548">
    <property type="term" value="F:phenylalanine ammonia-lyase activity"/>
    <property type="evidence" value="ECO:0000250"/>
    <property type="project" value="UniProtKB"/>
</dbReference>
<dbReference type="GO" id="GO:0009800">
    <property type="term" value="P:cinnamic acid biosynthetic process"/>
    <property type="evidence" value="ECO:0007669"/>
    <property type="project" value="UniProtKB-UniPathway"/>
</dbReference>
<dbReference type="GO" id="GO:0006559">
    <property type="term" value="P:L-phenylalanine catabolic process"/>
    <property type="evidence" value="ECO:0007669"/>
    <property type="project" value="UniProtKB-KW"/>
</dbReference>
<dbReference type="CDD" id="cd00332">
    <property type="entry name" value="PAL-HAL"/>
    <property type="match status" value="1"/>
</dbReference>
<dbReference type="Gene3D" id="1.20.200.10">
    <property type="entry name" value="Fumarase/aspartase (Central domain)"/>
    <property type="match status" value="1"/>
</dbReference>
<dbReference type="Gene3D" id="1.10.275.10">
    <property type="entry name" value="Fumarase/aspartase (N-terminal domain)"/>
    <property type="match status" value="1"/>
</dbReference>
<dbReference type="Gene3D" id="1.10.274.20">
    <property type="entry name" value="Phenylalanine ammonia-lyase 1, domain 3"/>
    <property type="match status" value="1"/>
</dbReference>
<dbReference type="InterPro" id="IPR001106">
    <property type="entry name" value="Aromatic_Lyase"/>
</dbReference>
<dbReference type="InterPro" id="IPR024083">
    <property type="entry name" value="Fumarase/histidase_N"/>
</dbReference>
<dbReference type="InterPro" id="IPR008948">
    <property type="entry name" value="L-Aspartase-like"/>
</dbReference>
<dbReference type="InterPro" id="IPR022313">
    <property type="entry name" value="Phe/His_NH3-lyase_AS"/>
</dbReference>
<dbReference type="InterPro" id="IPR005922">
    <property type="entry name" value="Phe_NH3-lyase"/>
</dbReference>
<dbReference type="InterPro" id="IPR023144">
    <property type="entry name" value="Phe_NH3-lyase_shielding_dom_sf"/>
</dbReference>
<dbReference type="NCBIfam" id="TIGR01226">
    <property type="entry name" value="phe_am_lyase"/>
    <property type="match status" value="1"/>
</dbReference>
<dbReference type="PANTHER" id="PTHR10362">
    <property type="entry name" value="HISTIDINE AMMONIA-LYASE"/>
    <property type="match status" value="1"/>
</dbReference>
<dbReference type="Pfam" id="PF00221">
    <property type="entry name" value="Lyase_aromatic"/>
    <property type="match status" value="1"/>
</dbReference>
<dbReference type="SUPFAM" id="SSF48557">
    <property type="entry name" value="L-aspartase-like"/>
    <property type="match status" value="1"/>
</dbReference>
<dbReference type="PROSITE" id="PS00488">
    <property type="entry name" value="PAL_HISTIDASE"/>
    <property type="match status" value="1"/>
</dbReference>
<reference key="1">
    <citation type="journal article" date="2001" name="Curr. Genet.">
        <title>Cloning and disruption of a phenylalanine ammonia-lyase gene from Ustilago maydis.</title>
        <authorList>
            <person name="Kim S.-H."/>
            <person name="Virmani D."/>
            <person name="Wake K."/>
            <person name="MacDonald K."/>
            <person name="Kronstad J.W."/>
            <person name="Ellis B.E."/>
        </authorList>
    </citation>
    <scope>NUCLEOTIDE SEQUENCE [GENOMIC DNA]</scope>
</reference>
<reference key="2">
    <citation type="journal article" date="2006" name="Nature">
        <title>Insights from the genome of the biotrophic fungal plant pathogen Ustilago maydis.</title>
        <authorList>
            <person name="Kaemper J."/>
            <person name="Kahmann R."/>
            <person name="Boelker M."/>
            <person name="Ma L.-J."/>
            <person name="Brefort T."/>
            <person name="Saville B.J."/>
            <person name="Banuett F."/>
            <person name="Kronstad J.W."/>
            <person name="Gold S.E."/>
            <person name="Mueller O."/>
            <person name="Perlin M.H."/>
            <person name="Woesten H.A.B."/>
            <person name="de Vries R."/>
            <person name="Ruiz-Herrera J."/>
            <person name="Reynaga-Pena C.G."/>
            <person name="Snetselaar K."/>
            <person name="McCann M."/>
            <person name="Perez-Martin J."/>
            <person name="Feldbruegge M."/>
            <person name="Basse C.W."/>
            <person name="Steinberg G."/>
            <person name="Ibeas J.I."/>
            <person name="Holloman W."/>
            <person name="Guzman P."/>
            <person name="Farman M.L."/>
            <person name="Stajich J.E."/>
            <person name="Sentandreu R."/>
            <person name="Gonzalez-Prieto J.M."/>
            <person name="Kennell J.C."/>
            <person name="Molina L."/>
            <person name="Schirawski J."/>
            <person name="Mendoza-Mendoza A."/>
            <person name="Greilinger D."/>
            <person name="Muench K."/>
            <person name="Roessel N."/>
            <person name="Scherer M."/>
            <person name="Vranes M."/>
            <person name="Ladendorf O."/>
            <person name="Vincon V."/>
            <person name="Fuchs U."/>
            <person name="Sandrock B."/>
            <person name="Meng S."/>
            <person name="Ho E.C.H."/>
            <person name="Cahill M.J."/>
            <person name="Boyce K.J."/>
            <person name="Klose J."/>
            <person name="Klosterman S.J."/>
            <person name="Deelstra H.J."/>
            <person name="Ortiz-Castellanos L."/>
            <person name="Li W."/>
            <person name="Sanchez-Alonso P."/>
            <person name="Schreier P.H."/>
            <person name="Haeuser-Hahn I."/>
            <person name="Vaupel M."/>
            <person name="Koopmann E."/>
            <person name="Friedrich G."/>
            <person name="Voss H."/>
            <person name="Schlueter T."/>
            <person name="Margolis J."/>
            <person name="Platt D."/>
            <person name="Swimmer C."/>
            <person name="Gnirke A."/>
            <person name="Chen F."/>
            <person name="Vysotskaia V."/>
            <person name="Mannhaupt G."/>
            <person name="Gueldener U."/>
            <person name="Muensterkoetter M."/>
            <person name="Haase D."/>
            <person name="Oesterheld M."/>
            <person name="Mewes H.-W."/>
            <person name="Mauceli E.W."/>
            <person name="DeCaprio D."/>
            <person name="Wade C.M."/>
            <person name="Butler J."/>
            <person name="Young S.K."/>
            <person name="Jaffe D.B."/>
            <person name="Calvo S.E."/>
            <person name="Nusbaum C."/>
            <person name="Galagan J.E."/>
            <person name="Birren B.W."/>
        </authorList>
    </citation>
    <scope>NUCLEOTIDE SEQUENCE [LARGE SCALE GENOMIC DNA]</scope>
    <source>
        <strain>DSM 14603 / FGSC 9021 / UM521</strain>
    </source>
</reference>
<reference key="3">
    <citation type="submission" date="2014-09" db="EMBL/GenBank/DDBJ databases">
        <authorList>
            <person name="Gueldener U."/>
            <person name="Muensterkoetter M."/>
            <person name="Walter M.C."/>
            <person name="Mannhaupt G."/>
            <person name="Kahmann R."/>
        </authorList>
    </citation>
    <scope>GENOME REANNOTATION</scope>
    <source>
        <strain>DSM 14603 / FGSC 9021 / UM521</strain>
    </source>
</reference>
<feature type="chain" id="PRO_0000215433" description="Phenylalanine ammonia-lyase">
    <location>
        <begin position="1"/>
        <end position="724"/>
    </location>
</feature>
<feature type="active site" description="Proton donor/acceptor" evidence="3">
    <location>
        <position position="91"/>
    </location>
</feature>
<feature type="binding site" evidence="3">
    <location>
        <position position="265"/>
    </location>
    <ligand>
        <name>(E)-cinnamate</name>
        <dbReference type="ChEBI" id="CHEBI:15669"/>
    </ligand>
</feature>
<feature type="binding site" evidence="3">
    <location>
        <position position="357"/>
    </location>
    <ligand>
        <name>(E)-cinnamate</name>
        <dbReference type="ChEBI" id="CHEBI:15669"/>
    </ligand>
</feature>
<feature type="binding site" evidence="3">
    <location>
        <position position="363"/>
    </location>
    <ligand>
        <name>(E)-cinnamate</name>
        <dbReference type="ChEBI" id="CHEBI:15669"/>
    </ligand>
</feature>
<feature type="binding site" evidence="3">
    <location>
        <position position="393"/>
    </location>
    <ligand>
        <name>(E)-cinnamate</name>
        <dbReference type="ChEBI" id="CHEBI:15669"/>
    </ligand>
</feature>
<feature type="binding site" evidence="2">
    <location>
        <position position="467"/>
    </location>
    <ligand>
        <name>(E)-cinnamate</name>
        <dbReference type="ChEBI" id="CHEBI:15669"/>
    </ligand>
</feature>
<feature type="binding site" evidence="2">
    <location>
        <position position="495"/>
    </location>
    <ligand>
        <name>(E)-cinnamate</name>
        <dbReference type="ChEBI" id="CHEBI:15669"/>
    </ligand>
</feature>
<feature type="binding site" evidence="3">
    <location>
        <position position="498"/>
    </location>
    <ligand>
        <name>(E)-cinnamate</name>
        <dbReference type="ChEBI" id="CHEBI:15669"/>
    </ligand>
</feature>
<feature type="modified residue" description="2,3-didehydroalanine (Ser)" evidence="4">
    <location>
        <position position="206"/>
    </location>
</feature>
<feature type="cross-link" description="5-imidazolinone (Ala-Gly)" evidence="3">
    <location>
        <begin position="205"/>
        <end position="207"/>
    </location>
</feature>
<feature type="sequence conflict" description="In Ref. 1; AAL09388." evidence="6" ref="1">
    <original>PVLD</original>
    <variation>TRPR</variation>
    <location>
        <begin position="61"/>
        <end position="64"/>
    </location>
</feature>
<feature type="sequence conflict" description="In Ref. 1; AAL09388." evidence="6" ref="1">
    <original>R</original>
    <variation>G</variation>
    <location>
        <position position="86"/>
    </location>
</feature>
<feature type="sequence conflict" description="In Ref. 1; AAL09388." evidence="6" ref="1">
    <original>L</original>
    <variation>H</variation>
    <location>
        <position position="330"/>
    </location>
</feature>
<feature type="sequence conflict" description="In Ref. 1; AAL09388." evidence="6" ref="1">
    <original>R</original>
    <variation>Q</variation>
    <location>
        <position position="363"/>
    </location>
</feature>
<feature type="sequence conflict" description="In Ref. 1; AAL09388." evidence="6" ref="1">
    <original>I</original>
    <variation>F</variation>
    <location>
        <position position="385"/>
    </location>
</feature>
<feature type="sequence conflict" description="In Ref. 1; AAL09388." evidence="6" ref="1">
    <original>D</original>
    <variation>N</variation>
    <location>
        <position position="470"/>
    </location>
</feature>
<feature type="sequence conflict" description="In Ref. 1; AAL09388." evidence="6" ref="1">
    <original>I</original>
    <variation>F</variation>
    <location>
        <position position="501"/>
    </location>
</feature>
<gene>
    <name type="primary">PAL1</name>
    <name type="ORF">UMAG_00078</name>
</gene>
<sequence>MAPTADVLPPVEASTRPGLLVQPSDTKLRKASSFRTEQVVIDGYNLKIQGLVASARYGHVPVLDPSAETRKRIDDSVQSLIAKLDRGESIYGINTGFGGSADSRTANTRALQLALLQMQQCGVLPVPSTFPTGEPSSAPFALPLTDTESSLIMPEAWVRGAIVVRLSSLMRGHSGVRWEVLDKMQKLFLQNNVTPVVPVRSSISASGDLSPLSYVAGALAGQRGIYCFVTDGRGQRVKVTADEACRMHKITPVQYEPKEALGLLNGTAFSASVAGLATYEAENLASLTQLTTAMAVEALKGTDASFAPFIHEIARPHPGQIKSAKFIRALLSGSRLAEHLENEKHVLFSEDNGTLRQDRYTLRTASQWVGPGLEDIENAKRSVDIEINSTTDNPMIDPYDGDGRIHHGGNFQAMAMTNAVEKIRLALCAMGKMTFQQMTELVNPAMNRGLPANLASTPDLSLNFHAKGIDIALASVTSELMFLGNPVSTHVQSAEMANQAINSLALISGRQTLQAIECLSMIQAWSLYLLCQALDIRALQYKVAEQLPTLILASLHSHFGEWMDETKQQEIAAQVLKSMSKRLDETSSKDLRDRLVETYQDASSVLVRYFSELPSGGGADPLRNIVKWRATGVADTEKIYRQVTIEFLDNPYACHASHLLGKTKRAYEFVRKTLGVPMHGKENLNEFKGEFEQWNTTGGYVSVIYASIRDGELYNMLSELERDL</sequence>